<evidence type="ECO:0000255" key="1">
    <source>
        <dbReference type="HAMAP-Rule" id="MF_01815"/>
    </source>
</evidence>
<feature type="chain" id="PRO_1000056425" description="Beta-ketoacyl-[acyl-carrier-protein] synthase III">
    <location>
        <begin position="1"/>
        <end position="324"/>
    </location>
</feature>
<feature type="region of interest" description="ACP-binding" evidence="1">
    <location>
        <begin position="250"/>
        <end position="254"/>
    </location>
</feature>
<feature type="active site" evidence="1">
    <location>
        <position position="112"/>
    </location>
</feature>
<feature type="active site" evidence="1">
    <location>
        <position position="249"/>
    </location>
</feature>
<feature type="active site" evidence="1">
    <location>
        <position position="279"/>
    </location>
</feature>
<accession>Q48RR7</accession>
<keyword id="KW-0012">Acyltransferase</keyword>
<keyword id="KW-0963">Cytoplasm</keyword>
<keyword id="KW-0275">Fatty acid biosynthesis</keyword>
<keyword id="KW-0276">Fatty acid metabolism</keyword>
<keyword id="KW-0444">Lipid biosynthesis</keyword>
<keyword id="KW-0443">Lipid metabolism</keyword>
<keyword id="KW-0511">Multifunctional enzyme</keyword>
<keyword id="KW-0808">Transferase</keyword>
<protein>
    <recommendedName>
        <fullName evidence="1">Beta-ketoacyl-[acyl-carrier-protein] synthase III</fullName>
        <shortName evidence="1">Beta-ketoacyl-ACP synthase III</shortName>
        <shortName evidence="1">KAS III</shortName>
        <ecNumber evidence="1">2.3.1.180</ecNumber>
    </recommendedName>
    <alternativeName>
        <fullName evidence="1">3-oxoacyl-[acyl-carrier-protein] synthase 3</fullName>
    </alternativeName>
    <alternativeName>
        <fullName evidence="1">3-oxoacyl-[acyl-carrier-protein] synthase III</fullName>
    </alternativeName>
</protein>
<reference key="1">
    <citation type="journal article" date="2005" name="J. Infect. Dis.">
        <title>Genome sequence of a serotype M28 strain of group A Streptococcus: potential new insights into puerperal sepsis and bacterial disease specificity.</title>
        <authorList>
            <person name="Green N.M."/>
            <person name="Zhang S."/>
            <person name="Porcella S.F."/>
            <person name="Nagiec M.J."/>
            <person name="Barbian K.D."/>
            <person name="Beres S.B."/>
            <person name="Lefebvre R.B."/>
            <person name="Musser J.M."/>
        </authorList>
    </citation>
    <scope>NUCLEOTIDE SEQUENCE [LARGE SCALE GENOMIC DNA]</scope>
    <source>
        <strain>MGAS6180</strain>
    </source>
</reference>
<proteinExistence type="inferred from homology"/>
<sequence length="324" mass="34848">MIFSKISQVAHYVPQQLVTNNDLASIMDTSHEWIFSRTGIAERHISRDEMTSDLAIQVADQLLTQSGLKADAIDFIIVATISPDATMPSTAAKVQAAIAATSAFAFDMTAACSGFVFALAMADKLIASGAYQNGMVIGAETLSKLVNWQDRATAVLFGDGAGGVLLEASKDKHVLAETLHTDGARCQSLISGETSLSSPYSIGKKAIATIQMDGRAIFDFAIRDVSKSILTLMAQSDITKDDIDYCLLHQANRRILDKIARKIDVPREKFLENMMRYGNTSAASIPILLSEAVQKGQIRLDGTQKILLSGFGGGLTWGSLIVKI</sequence>
<name>FABH_STRPM</name>
<comment type="function">
    <text evidence="1">Catalyzes the condensation reaction of fatty acid synthesis by the addition to an acyl acceptor of two carbons from malonyl-ACP. Catalyzes the first condensation reaction which initiates fatty acid synthesis and may therefore play a role in governing the total rate of fatty acid production. Possesses both acetoacetyl-ACP synthase and acetyl transacylase activities. Its substrate specificity determines the biosynthesis of branched-chain and/or straight-chain of fatty acids.</text>
</comment>
<comment type="catalytic activity">
    <reaction evidence="1">
        <text>malonyl-[ACP] + acetyl-CoA + H(+) = 3-oxobutanoyl-[ACP] + CO2 + CoA</text>
        <dbReference type="Rhea" id="RHEA:12080"/>
        <dbReference type="Rhea" id="RHEA-COMP:9623"/>
        <dbReference type="Rhea" id="RHEA-COMP:9625"/>
        <dbReference type="ChEBI" id="CHEBI:15378"/>
        <dbReference type="ChEBI" id="CHEBI:16526"/>
        <dbReference type="ChEBI" id="CHEBI:57287"/>
        <dbReference type="ChEBI" id="CHEBI:57288"/>
        <dbReference type="ChEBI" id="CHEBI:78449"/>
        <dbReference type="ChEBI" id="CHEBI:78450"/>
        <dbReference type="EC" id="2.3.1.180"/>
    </reaction>
</comment>
<comment type="pathway">
    <text evidence="1">Lipid metabolism; fatty acid biosynthesis.</text>
</comment>
<comment type="subunit">
    <text evidence="1">Homodimer.</text>
</comment>
<comment type="subcellular location">
    <subcellularLocation>
        <location evidence="1">Cytoplasm</location>
    </subcellularLocation>
</comment>
<comment type="domain">
    <text evidence="1">The last Arg residue of the ACP-binding site is essential for the weak association between ACP/AcpP and FabH.</text>
</comment>
<comment type="similarity">
    <text evidence="1">Belongs to the thiolase-like superfamily. FabH family.</text>
</comment>
<gene>
    <name evidence="1" type="primary">fabH</name>
    <name type="ordered locus">M28_Spy1483</name>
</gene>
<dbReference type="EC" id="2.3.1.180" evidence="1"/>
<dbReference type="EMBL" id="CP000056">
    <property type="protein sequence ID" value="AAX72593.1"/>
    <property type="molecule type" value="Genomic_DNA"/>
</dbReference>
<dbReference type="RefSeq" id="WP_002988609.1">
    <property type="nucleotide sequence ID" value="NC_007296.2"/>
</dbReference>
<dbReference type="SMR" id="Q48RR7"/>
<dbReference type="KEGG" id="spb:M28_Spy1483"/>
<dbReference type="HOGENOM" id="CLU_039592_4_1_9"/>
<dbReference type="UniPathway" id="UPA00094"/>
<dbReference type="GO" id="GO:0005737">
    <property type="term" value="C:cytoplasm"/>
    <property type="evidence" value="ECO:0007669"/>
    <property type="project" value="UniProtKB-SubCell"/>
</dbReference>
<dbReference type="GO" id="GO:0004315">
    <property type="term" value="F:3-oxoacyl-[acyl-carrier-protein] synthase activity"/>
    <property type="evidence" value="ECO:0007669"/>
    <property type="project" value="InterPro"/>
</dbReference>
<dbReference type="GO" id="GO:0033818">
    <property type="term" value="F:beta-ketoacyl-acyl-carrier-protein synthase III activity"/>
    <property type="evidence" value="ECO:0007669"/>
    <property type="project" value="UniProtKB-UniRule"/>
</dbReference>
<dbReference type="GO" id="GO:0006633">
    <property type="term" value="P:fatty acid biosynthetic process"/>
    <property type="evidence" value="ECO:0007669"/>
    <property type="project" value="UniProtKB-UniRule"/>
</dbReference>
<dbReference type="CDD" id="cd00830">
    <property type="entry name" value="KAS_III"/>
    <property type="match status" value="1"/>
</dbReference>
<dbReference type="Gene3D" id="3.40.47.10">
    <property type="match status" value="1"/>
</dbReference>
<dbReference type="HAMAP" id="MF_01815">
    <property type="entry name" value="FabH"/>
    <property type="match status" value="1"/>
</dbReference>
<dbReference type="InterPro" id="IPR013747">
    <property type="entry name" value="ACP_syn_III_C"/>
</dbReference>
<dbReference type="InterPro" id="IPR013751">
    <property type="entry name" value="ACP_syn_III_N"/>
</dbReference>
<dbReference type="InterPro" id="IPR004655">
    <property type="entry name" value="FabH"/>
</dbReference>
<dbReference type="InterPro" id="IPR016039">
    <property type="entry name" value="Thiolase-like"/>
</dbReference>
<dbReference type="NCBIfam" id="TIGR00747">
    <property type="entry name" value="fabH"/>
    <property type="match status" value="1"/>
</dbReference>
<dbReference type="NCBIfam" id="NF006829">
    <property type="entry name" value="PRK09352.1"/>
    <property type="match status" value="1"/>
</dbReference>
<dbReference type="PANTHER" id="PTHR43091">
    <property type="entry name" value="3-OXOACYL-[ACYL-CARRIER-PROTEIN] SYNTHASE"/>
    <property type="match status" value="1"/>
</dbReference>
<dbReference type="PANTHER" id="PTHR43091:SF1">
    <property type="entry name" value="BETA-KETOACYL-[ACYL-CARRIER-PROTEIN] SYNTHASE III, CHLOROPLASTIC"/>
    <property type="match status" value="1"/>
</dbReference>
<dbReference type="Pfam" id="PF08545">
    <property type="entry name" value="ACP_syn_III"/>
    <property type="match status" value="1"/>
</dbReference>
<dbReference type="Pfam" id="PF08541">
    <property type="entry name" value="ACP_syn_III_C"/>
    <property type="match status" value="1"/>
</dbReference>
<dbReference type="SUPFAM" id="SSF53901">
    <property type="entry name" value="Thiolase-like"/>
    <property type="match status" value="1"/>
</dbReference>
<organism>
    <name type="scientific">Streptococcus pyogenes serotype M28 (strain MGAS6180)</name>
    <dbReference type="NCBI Taxonomy" id="319701"/>
    <lineage>
        <taxon>Bacteria</taxon>
        <taxon>Bacillati</taxon>
        <taxon>Bacillota</taxon>
        <taxon>Bacilli</taxon>
        <taxon>Lactobacillales</taxon>
        <taxon>Streptococcaceae</taxon>
        <taxon>Streptococcus</taxon>
    </lineage>
</organism>